<reference key="1">
    <citation type="submission" date="2007-08" db="EMBL/GenBank/DDBJ databases">
        <authorList>
            <consortium name="The Citrobacter koseri Genome Sequencing Project"/>
            <person name="McClelland M."/>
            <person name="Sanderson E.K."/>
            <person name="Porwollik S."/>
            <person name="Spieth J."/>
            <person name="Clifton W.S."/>
            <person name="Latreille P."/>
            <person name="Courtney L."/>
            <person name="Wang C."/>
            <person name="Pepin K."/>
            <person name="Bhonagiri V."/>
            <person name="Nash W."/>
            <person name="Johnson M."/>
            <person name="Thiruvilangam P."/>
            <person name="Wilson R."/>
        </authorList>
    </citation>
    <scope>NUCLEOTIDE SEQUENCE [LARGE SCALE GENOMIC DNA]</scope>
    <source>
        <strain>ATCC BAA-895 / CDC 4225-83 / SGSC4696</strain>
    </source>
</reference>
<dbReference type="EMBL" id="CP000822">
    <property type="protein sequence ID" value="ABV12240.1"/>
    <property type="molecule type" value="Genomic_DNA"/>
</dbReference>
<dbReference type="RefSeq" id="WP_012131994.1">
    <property type="nucleotide sequence ID" value="NC_009792.1"/>
</dbReference>
<dbReference type="SMR" id="A8AFH7"/>
<dbReference type="STRING" id="290338.CKO_01097"/>
<dbReference type="GeneID" id="45135246"/>
<dbReference type="KEGG" id="cko:CKO_01097"/>
<dbReference type="HOGENOM" id="CLU_062974_2_2_6"/>
<dbReference type="OrthoDB" id="9781053at2"/>
<dbReference type="Proteomes" id="UP000008148">
    <property type="component" value="Chromosome"/>
</dbReference>
<dbReference type="GO" id="GO:0005829">
    <property type="term" value="C:cytosol"/>
    <property type="evidence" value="ECO:0007669"/>
    <property type="project" value="TreeGrafter"/>
</dbReference>
<dbReference type="GO" id="GO:0003677">
    <property type="term" value="F:DNA binding"/>
    <property type="evidence" value="ECO:0007669"/>
    <property type="project" value="UniProtKB-UniRule"/>
</dbReference>
<dbReference type="GO" id="GO:0006355">
    <property type="term" value="P:regulation of DNA-templated transcription"/>
    <property type="evidence" value="ECO:0007669"/>
    <property type="project" value="UniProtKB-UniRule"/>
</dbReference>
<dbReference type="FunFam" id="1.10.10.200:FF:000001">
    <property type="entry name" value="Probable transcriptional regulatory protein YebC"/>
    <property type="match status" value="1"/>
</dbReference>
<dbReference type="FunFam" id="3.30.70.980:FF:000002">
    <property type="entry name" value="Probable transcriptional regulatory protein YebC"/>
    <property type="match status" value="1"/>
</dbReference>
<dbReference type="Gene3D" id="1.10.10.200">
    <property type="match status" value="1"/>
</dbReference>
<dbReference type="Gene3D" id="3.30.70.980">
    <property type="match status" value="2"/>
</dbReference>
<dbReference type="HAMAP" id="MF_00693">
    <property type="entry name" value="Transcrip_reg_TACO1"/>
    <property type="match status" value="1"/>
</dbReference>
<dbReference type="InterPro" id="IPR017856">
    <property type="entry name" value="Integrase-like_N"/>
</dbReference>
<dbReference type="InterPro" id="IPR048300">
    <property type="entry name" value="TACO1_YebC-like_2nd/3rd_dom"/>
</dbReference>
<dbReference type="InterPro" id="IPR049083">
    <property type="entry name" value="TACO1_YebC_N"/>
</dbReference>
<dbReference type="InterPro" id="IPR002876">
    <property type="entry name" value="Transcrip_reg_TACO1-like"/>
</dbReference>
<dbReference type="InterPro" id="IPR026564">
    <property type="entry name" value="Transcrip_reg_TACO1-like_dom3"/>
</dbReference>
<dbReference type="InterPro" id="IPR029072">
    <property type="entry name" value="YebC-like"/>
</dbReference>
<dbReference type="NCBIfam" id="NF001030">
    <property type="entry name" value="PRK00110.1"/>
    <property type="match status" value="1"/>
</dbReference>
<dbReference type="NCBIfam" id="NF009044">
    <property type="entry name" value="PRK12378.1"/>
    <property type="match status" value="1"/>
</dbReference>
<dbReference type="NCBIfam" id="TIGR01033">
    <property type="entry name" value="YebC/PmpR family DNA-binding transcriptional regulator"/>
    <property type="match status" value="1"/>
</dbReference>
<dbReference type="PANTHER" id="PTHR12532:SF6">
    <property type="entry name" value="TRANSCRIPTIONAL REGULATORY PROTEIN YEBC-RELATED"/>
    <property type="match status" value="1"/>
</dbReference>
<dbReference type="PANTHER" id="PTHR12532">
    <property type="entry name" value="TRANSLATIONAL ACTIVATOR OF CYTOCHROME C OXIDASE 1"/>
    <property type="match status" value="1"/>
</dbReference>
<dbReference type="Pfam" id="PF20772">
    <property type="entry name" value="TACO1_YebC_N"/>
    <property type="match status" value="1"/>
</dbReference>
<dbReference type="Pfam" id="PF01709">
    <property type="entry name" value="Transcrip_reg"/>
    <property type="match status" value="1"/>
</dbReference>
<dbReference type="SUPFAM" id="SSF75625">
    <property type="entry name" value="YebC-like"/>
    <property type="match status" value="1"/>
</dbReference>
<sequence>MAGHSKWANTRHRKAAQDAKRGKIFTKIIRELVTAAKLGGGDPDANPRLRAAVDKALSNNMTRDTLNRAIARGVGGDDDANMETIIYEGYGPGGTAVMVECLSDNRNRTVAEVRHAFSKCGGNLGTDGSVAYLFSKKGVISFEQGDEDTIMEAALEAGAEDVVTFDDGAIDVYTAWEEMGKVRDALEAAGLKADNAEVSMIPSTKADMDAETAPKLMRLIDMLEDCDDVQEVYHNGEISDEVAATL</sequence>
<evidence type="ECO:0000255" key="1">
    <source>
        <dbReference type="HAMAP-Rule" id="MF_00693"/>
    </source>
</evidence>
<evidence type="ECO:0000256" key="2">
    <source>
        <dbReference type="SAM" id="MobiDB-lite"/>
    </source>
</evidence>
<organism>
    <name type="scientific">Citrobacter koseri (strain ATCC BAA-895 / CDC 4225-83 / SGSC4696)</name>
    <dbReference type="NCBI Taxonomy" id="290338"/>
    <lineage>
        <taxon>Bacteria</taxon>
        <taxon>Pseudomonadati</taxon>
        <taxon>Pseudomonadota</taxon>
        <taxon>Gammaproteobacteria</taxon>
        <taxon>Enterobacterales</taxon>
        <taxon>Enterobacteriaceae</taxon>
        <taxon>Citrobacter</taxon>
    </lineage>
</organism>
<feature type="chain" id="PRO_1000045296" description="Probable transcriptional regulatory protein CKO_01097">
    <location>
        <begin position="1"/>
        <end position="246"/>
    </location>
</feature>
<feature type="region of interest" description="Disordered" evidence="2">
    <location>
        <begin position="1"/>
        <end position="20"/>
    </location>
</feature>
<protein>
    <recommendedName>
        <fullName evidence="1">Probable transcriptional regulatory protein CKO_01097</fullName>
    </recommendedName>
</protein>
<name>Y1097_CITK8</name>
<accession>A8AFH7</accession>
<gene>
    <name type="ordered locus">CKO_01097</name>
</gene>
<proteinExistence type="inferred from homology"/>
<comment type="subcellular location">
    <subcellularLocation>
        <location evidence="1">Cytoplasm</location>
    </subcellularLocation>
</comment>
<comment type="similarity">
    <text evidence="1">Belongs to the TACO1 family.</text>
</comment>
<keyword id="KW-0963">Cytoplasm</keyword>
<keyword id="KW-0238">DNA-binding</keyword>
<keyword id="KW-1185">Reference proteome</keyword>
<keyword id="KW-0804">Transcription</keyword>
<keyword id="KW-0805">Transcription regulation</keyword>